<comment type="function">
    <text evidence="2">Catalyzes the reversible epimerization of D-ribulose 5-phosphate to D-xylulose 5-phosphate.</text>
</comment>
<comment type="catalytic activity">
    <reaction evidence="2">
        <text>D-ribulose 5-phosphate = D-xylulose 5-phosphate</text>
        <dbReference type="Rhea" id="RHEA:13677"/>
        <dbReference type="ChEBI" id="CHEBI:57737"/>
        <dbReference type="ChEBI" id="CHEBI:58121"/>
        <dbReference type="EC" id="5.1.3.1"/>
    </reaction>
</comment>
<comment type="cofactor">
    <cofactor evidence="3">
        <name>Co(2+)</name>
        <dbReference type="ChEBI" id="CHEBI:48828"/>
    </cofactor>
    <cofactor evidence="3">
        <name>Fe(2+)</name>
        <dbReference type="ChEBI" id="CHEBI:29033"/>
    </cofactor>
    <cofactor evidence="3">
        <name>Mn(2+)</name>
        <dbReference type="ChEBI" id="CHEBI:29035"/>
    </cofactor>
    <cofactor evidence="3">
        <name>Zn(2+)</name>
        <dbReference type="ChEBI" id="CHEBI:29105"/>
    </cofactor>
    <text evidence="3">Binds 1 divalent metal cation per subunit. Active with Co(2+), Fe(2+), Mn(2+) and Zn(2+).</text>
</comment>
<comment type="pathway">
    <text evidence="2">Carbohydrate biosynthesis; Calvin cycle.</text>
</comment>
<comment type="subunit">
    <text evidence="4">Homohexamer.</text>
</comment>
<comment type="subcellular location">
    <subcellularLocation>
        <location evidence="2">Plastid</location>
        <location evidence="2">Chloroplast thylakoid membrane</location>
    </subcellularLocation>
</comment>
<comment type="tissue specificity">
    <text evidence="5">Highest level of expression in leaves, whereas it is low in roots, tubers, and stems.</text>
</comment>
<comment type="similarity">
    <text evidence="6">Belongs to the ribulose-phosphate 3-epimerase family.</text>
</comment>
<sequence length="280" mass="29881">SLGSSTLLQSQISGFGGSQKLQKISFSNPNSLTFTRRRIQTVVNASSRVDKFSKSDIIVSPSILSANFSKLGEQVKAIEQAGCDWIHVDVMDGRFVPNITIGPLVVDSLRPITDLPLDVHLMIVEPDQRVPDFIKAGADIVSVHCEQSSTIHLHRTINQIKSLGAKAGVVLNPGTPLTAIEYVLDAVDLVLIMSVNPGFGGQSFIESQVKKISDLRKICAERGLNPWIEVDGGVGPKNAYKVIEAGANALVAGSAVFGAPDYAEAIKGIKTSKRPEAVAV</sequence>
<keyword id="KW-0002">3D-structure</keyword>
<keyword id="KW-0113">Calvin cycle</keyword>
<keyword id="KW-0119">Carbohydrate metabolism</keyword>
<keyword id="KW-0150">Chloroplast</keyword>
<keyword id="KW-0170">Cobalt</keyword>
<keyword id="KW-0903">Direct protein sequencing</keyword>
<keyword id="KW-0408">Iron</keyword>
<keyword id="KW-0413">Isomerase</keyword>
<keyword id="KW-0464">Manganese</keyword>
<keyword id="KW-0472">Membrane</keyword>
<keyword id="KW-0479">Metal-binding</keyword>
<keyword id="KW-0570">Pentose shunt</keyword>
<keyword id="KW-0934">Plastid</keyword>
<keyword id="KW-1185">Reference proteome</keyword>
<keyword id="KW-0793">Thylakoid</keyword>
<keyword id="KW-0809">Transit peptide</keyword>
<keyword id="KW-0862">Zinc</keyword>
<protein>
    <recommendedName>
        <fullName>Ribulose-phosphate 3-epimerase, chloroplastic</fullName>
        <ecNumber evidence="2">5.1.3.1</ecNumber>
    </recommendedName>
    <alternativeName>
        <fullName>Pentose-5-phosphate 3-epimerase</fullName>
        <shortName>PPE</shortName>
    </alternativeName>
    <alternativeName>
        <fullName>R5P3E</fullName>
        <shortName>RPE</shortName>
    </alternativeName>
</protein>
<accession>Q43843</accession>
<evidence type="ECO:0000250" key="1">
    <source>
        <dbReference type="UniProtKB" id="P32719"/>
    </source>
</evidence>
<evidence type="ECO:0000250" key="2">
    <source>
        <dbReference type="UniProtKB" id="Q43157"/>
    </source>
</evidence>
<evidence type="ECO:0000250" key="3">
    <source>
        <dbReference type="UniProtKB" id="Q96AT9"/>
    </source>
</evidence>
<evidence type="ECO:0000269" key="4">
    <source>
    </source>
</evidence>
<evidence type="ECO:0000269" key="5">
    <source>
    </source>
</evidence>
<evidence type="ECO:0000305" key="6"/>
<evidence type="ECO:0007829" key="7">
    <source>
        <dbReference type="PDB" id="1RPX"/>
    </source>
</evidence>
<reference key="1">
    <citation type="journal article" date="1995" name="FEBS Lett.">
        <title>Chloroplast pentose-5-phosphate 3-epimerase from potato: cloning, cDNA sequence, and tissue-specific enzyme accumulation.</title>
        <authorList>
            <person name="Teige M."/>
            <person name="Kopriva S."/>
            <person name="Bauwe H."/>
            <person name="Suess K.-H."/>
        </authorList>
    </citation>
    <scope>NUCLEOTIDE SEQUENCE [MRNA]</scope>
    <scope>PARTIAL PROTEIN SEQUENCE</scope>
    <scope>TISSUE SPECIFICITY</scope>
    <source>
        <strain>cv. Desiree</strain>
        <tissue>Leaf</tissue>
    </source>
</reference>
<reference key="2">
    <citation type="journal article" date="1999" name="J. Mol. Biol.">
        <title>Structure and mechanism of the amphibolic enzyme D-ribulose-5-phosphate 3-epimerase from potato chloroplasts.</title>
        <authorList>
            <person name="Kopp J."/>
            <person name="Kopriva S."/>
            <person name="Suess K.-H."/>
            <person name="Schulz G.E."/>
        </authorList>
    </citation>
    <scope>X-RAY CRYSTALLOGRAPHY (2.3 ANGSTROMS)</scope>
    <scope>SUBUNIT</scope>
</reference>
<feature type="transit peptide" description="Chloroplast" evidence="5">
    <location>
        <begin position="1" status="less than"/>
        <end position="45"/>
    </location>
</feature>
<feature type="chain" id="PRO_0000025417" description="Ribulose-phosphate 3-epimerase, chloroplastic">
    <location>
        <begin position="46"/>
        <end position="280"/>
    </location>
</feature>
<feature type="active site" description="Proton acceptor" evidence="1">
    <location>
        <position position="89"/>
    </location>
</feature>
<feature type="active site" description="Proton donor" evidence="1">
    <location>
        <position position="231"/>
    </location>
</feature>
<feature type="binding site" evidence="1">
    <location>
        <position position="62"/>
    </location>
    <ligand>
        <name>substrate</name>
    </ligand>
</feature>
<feature type="binding site" evidence="1">
    <location>
        <position position="87"/>
    </location>
    <ligand>
        <name>a divalent metal cation</name>
        <dbReference type="ChEBI" id="CHEBI:60240"/>
    </ligand>
</feature>
<feature type="binding site" evidence="1">
    <location>
        <position position="89"/>
    </location>
    <ligand>
        <name>a divalent metal cation</name>
        <dbReference type="ChEBI" id="CHEBI:60240"/>
    </ligand>
</feature>
<feature type="binding site" evidence="1">
    <location>
        <position position="120"/>
    </location>
    <ligand>
        <name>a divalent metal cation</name>
        <dbReference type="ChEBI" id="CHEBI:60240"/>
    </ligand>
</feature>
<feature type="binding site" evidence="1">
    <location>
        <position position="120"/>
    </location>
    <ligand>
        <name>substrate</name>
    </ligand>
</feature>
<feature type="binding site" evidence="1">
    <location>
        <begin position="198"/>
        <end position="201"/>
    </location>
    <ligand>
        <name>substrate</name>
    </ligand>
</feature>
<feature type="binding site" evidence="1">
    <location>
        <begin position="231"/>
        <end position="233"/>
    </location>
    <ligand>
        <name>substrate</name>
    </ligand>
</feature>
<feature type="binding site" evidence="1">
    <location>
        <position position="231"/>
    </location>
    <ligand>
        <name>a divalent metal cation</name>
        <dbReference type="ChEBI" id="CHEBI:60240"/>
    </ligand>
</feature>
<feature type="binding site" evidence="1">
    <location>
        <begin position="253"/>
        <end position="254"/>
    </location>
    <ligand>
        <name>substrate</name>
    </ligand>
</feature>
<feature type="non-terminal residue">
    <location>
        <position position="1"/>
    </location>
</feature>
<feature type="helix" evidence="7">
    <location>
        <begin position="48"/>
        <end position="51"/>
    </location>
</feature>
<feature type="strand" evidence="7">
    <location>
        <begin position="58"/>
        <end position="62"/>
    </location>
</feature>
<feature type="helix" evidence="7">
    <location>
        <begin position="63"/>
        <end position="65"/>
    </location>
</feature>
<feature type="helix" evidence="7">
    <location>
        <begin position="68"/>
        <end position="70"/>
    </location>
</feature>
<feature type="helix" evidence="7">
    <location>
        <begin position="71"/>
        <end position="80"/>
    </location>
</feature>
<feature type="strand" evidence="7">
    <location>
        <begin position="86"/>
        <end position="97"/>
    </location>
</feature>
<feature type="helix" evidence="7">
    <location>
        <begin position="103"/>
        <end position="109"/>
    </location>
</feature>
<feature type="helix" evidence="7">
    <location>
        <begin position="110"/>
        <end position="112"/>
    </location>
</feature>
<feature type="strand" evidence="7">
    <location>
        <begin position="117"/>
        <end position="125"/>
    </location>
</feature>
<feature type="helix" evidence="7">
    <location>
        <begin position="126"/>
        <end position="135"/>
    </location>
</feature>
<feature type="strand" evidence="7">
    <location>
        <begin position="139"/>
        <end position="144"/>
    </location>
</feature>
<feature type="turn" evidence="7">
    <location>
        <begin position="147"/>
        <end position="149"/>
    </location>
</feature>
<feature type="helix" evidence="7">
    <location>
        <begin position="153"/>
        <end position="162"/>
    </location>
</feature>
<feature type="strand" evidence="7">
    <location>
        <begin position="165"/>
        <end position="171"/>
    </location>
</feature>
<feature type="helix" evidence="7">
    <location>
        <begin position="177"/>
        <end position="180"/>
    </location>
</feature>
<feature type="turn" evidence="7">
    <location>
        <begin position="181"/>
        <end position="186"/>
    </location>
</feature>
<feature type="strand" evidence="7">
    <location>
        <begin position="188"/>
        <end position="195"/>
    </location>
</feature>
<feature type="helix" evidence="7">
    <location>
        <begin position="208"/>
        <end position="222"/>
    </location>
</feature>
<feature type="strand" evidence="7">
    <location>
        <begin position="227"/>
        <end position="233"/>
    </location>
</feature>
<feature type="turn" evidence="7">
    <location>
        <begin position="236"/>
        <end position="238"/>
    </location>
</feature>
<feature type="helix" evidence="7">
    <location>
        <begin position="239"/>
        <end position="245"/>
    </location>
</feature>
<feature type="strand" evidence="7">
    <location>
        <begin position="249"/>
        <end position="253"/>
    </location>
</feature>
<feature type="helix" evidence="7">
    <location>
        <begin position="254"/>
        <end position="257"/>
    </location>
</feature>
<feature type="helix" evidence="7">
    <location>
        <begin position="262"/>
        <end position="270"/>
    </location>
</feature>
<dbReference type="EC" id="5.1.3.1" evidence="2"/>
<dbReference type="EMBL" id="Z50098">
    <property type="protein sequence ID" value="CAA90426.1"/>
    <property type="molecule type" value="mRNA"/>
</dbReference>
<dbReference type="PIR" id="S68407">
    <property type="entry name" value="S68407"/>
</dbReference>
<dbReference type="PDB" id="1RPX">
    <property type="method" value="X-ray"/>
    <property type="resolution" value="2.30 A"/>
    <property type="chains" value="A/B/C=47-276"/>
</dbReference>
<dbReference type="PDBsum" id="1RPX"/>
<dbReference type="SMR" id="Q43843"/>
<dbReference type="FunCoup" id="Q43843">
    <property type="interactions" value="1403"/>
</dbReference>
<dbReference type="STRING" id="4113.Q43843"/>
<dbReference type="PaxDb" id="4113-PGSC0003DMT400050256"/>
<dbReference type="eggNOG" id="KOG3111">
    <property type="taxonomic scope" value="Eukaryota"/>
</dbReference>
<dbReference type="InParanoid" id="Q43843"/>
<dbReference type="SABIO-RK" id="Q43843"/>
<dbReference type="UniPathway" id="UPA00116"/>
<dbReference type="EvolutionaryTrace" id="Q43843"/>
<dbReference type="Proteomes" id="UP000011115">
    <property type="component" value="Unassembled WGS sequence"/>
</dbReference>
<dbReference type="ExpressionAtlas" id="Q43843">
    <property type="expression patterns" value="baseline"/>
</dbReference>
<dbReference type="GO" id="GO:0009535">
    <property type="term" value="C:chloroplast thylakoid membrane"/>
    <property type="evidence" value="ECO:0000250"/>
    <property type="project" value="UniProtKB"/>
</dbReference>
<dbReference type="GO" id="GO:0005829">
    <property type="term" value="C:cytosol"/>
    <property type="evidence" value="ECO:0000318"/>
    <property type="project" value="GO_Central"/>
</dbReference>
<dbReference type="GO" id="GO:0004750">
    <property type="term" value="F:D-ribulose-phosphate 3-epimerase activity"/>
    <property type="evidence" value="ECO:0000250"/>
    <property type="project" value="UniProtKB"/>
</dbReference>
<dbReference type="GO" id="GO:0046872">
    <property type="term" value="F:metal ion binding"/>
    <property type="evidence" value="ECO:0000318"/>
    <property type="project" value="GO_Central"/>
</dbReference>
<dbReference type="GO" id="GO:0005975">
    <property type="term" value="P:carbohydrate metabolic process"/>
    <property type="evidence" value="ECO:0000318"/>
    <property type="project" value="GO_Central"/>
</dbReference>
<dbReference type="GO" id="GO:0009052">
    <property type="term" value="P:pentose-phosphate shunt, non-oxidative branch"/>
    <property type="evidence" value="ECO:0000318"/>
    <property type="project" value="GO_Central"/>
</dbReference>
<dbReference type="GO" id="GO:0019253">
    <property type="term" value="P:reductive pentose-phosphate cycle"/>
    <property type="evidence" value="ECO:0007669"/>
    <property type="project" value="UniProtKB-UniPathway"/>
</dbReference>
<dbReference type="CDD" id="cd00429">
    <property type="entry name" value="RPE"/>
    <property type="match status" value="1"/>
</dbReference>
<dbReference type="FunFam" id="3.20.20.70:FF:000004">
    <property type="entry name" value="Ribulose-phosphate 3-epimerase"/>
    <property type="match status" value="1"/>
</dbReference>
<dbReference type="Gene3D" id="3.20.20.70">
    <property type="entry name" value="Aldolase class I"/>
    <property type="match status" value="1"/>
</dbReference>
<dbReference type="HAMAP" id="MF_02227">
    <property type="entry name" value="RPE"/>
    <property type="match status" value="1"/>
</dbReference>
<dbReference type="InterPro" id="IPR013785">
    <property type="entry name" value="Aldolase_TIM"/>
</dbReference>
<dbReference type="InterPro" id="IPR026019">
    <property type="entry name" value="Ribul_P_3_epim"/>
</dbReference>
<dbReference type="InterPro" id="IPR000056">
    <property type="entry name" value="Ribul_P_3_epim-like"/>
</dbReference>
<dbReference type="InterPro" id="IPR011060">
    <property type="entry name" value="RibuloseP-bd_barrel"/>
</dbReference>
<dbReference type="NCBIfam" id="NF004076">
    <property type="entry name" value="PRK05581.1-4"/>
    <property type="match status" value="1"/>
</dbReference>
<dbReference type="NCBIfam" id="TIGR01163">
    <property type="entry name" value="rpe"/>
    <property type="match status" value="1"/>
</dbReference>
<dbReference type="PANTHER" id="PTHR11749">
    <property type="entry name" value="RIBULOSE-5-PHOSPHATE-3-EPIMERASE"/>
    <property type="match status" value="1"/>
</dbReference>
<dbReference type="Pfam" id="PF00834">
    <property type="entry name" value="Ribul_P_3_epim"/>
    <property type="match status" value="1"/>
</dbReference>
<dbReference type="SUPFAM" id="SSF51366">
    <property type="entry name" value="Ribulose-phoshate binding barrel"/>
    <property type="match status" value="1"/>
</dbReference>
<dbReference type="PROSITE" id="PS01085">
    <property type="entry name" value="RIBUL_P_3_EPIMER_1"/>
    <property type="match status" value="1"/>
</dbReference>
<dbReference type="PROSITE" id="PS01086">
    <property type="entry name" value="RIBUL_P_3_EPIMER_2"/>
    <property type="match status" value="1"/>
</dbReference>
<proteinExistence type="evidence at protein level"/>
<name>RPE_SOLTU</name>
<organism>
    <name type="scientific">Solanum tuberosum</name>
    <name type="common">Potato</name>
    <dbReference type="NCBI Taxonomy" id="4113"/>
    <lineage>
        <taxon>Eukaryota</taxon>
        <taxon>Viridiplantae</taxon>
        <taxon>Streptophyta</taxon>
        <taxon>Embryophyta</taxon>
        <taxon>Tracheophyta</taxon>
        <taxon>Spermatophyta</taxon>
        <taxon>Magnoliopsida</taxon>
        <taxon>eudicotyledons</taxon>
        <taxon>Gunneridae</taxon>
        <taxon>Pentapetalae</taxon>
        <taxon>asterids</taxon>
        <taxon>lamiids</taxon>
        <taxon>Solanales</taxon>
        <taxon>Solanaceae</taxon>
        <taxon>Solanoideae</taxon>
        <taxon>Solaneae</taxon>
        <taxon>Solanum</taxon>
    </lineage>
</organism>